<evidence type="ECO:0000250" key="1"/>
<evidence type="ECO:0000250" key="2">
    <source>
        <dbReference type="UniProtKB" id="P29022"/>
    </source>
</evidence>
<evidence type="ECO:0000255" key="3">
    <source>
        <dbReference type="PROSITE-ProRule" id="PRU00261"/>
    </source>
</evidence>
<evidence type="ECO:0000269" key="4">
    <source>
    </source>
</evidence>
<evidence type="ECO:0000305" key="5"/>
<reference key="1">
    <citation type="journal article" date="1993" name="Plant Mol. Biol.">
        <title>Molecular characterization of four chitinase cDNAs obtained from Cladosporium fulvum-infected tomato.</title>
        <authorList>
            <person name="Danhash N."/>
            <person name="Wagemakers C.A.M."/>
            <person name="van Kan J.A.L."/>
            <person name="de Wit P.J.G.M."/>
        </authorList>
    </citation>
    <scope>NUCLEOTIDE SEQUENCE [MRNA]</scope>
    <scope>PARTIAL PROTEIN SEQUENCE</scope>
    <source>
        <strain>cv. Moneymaker</strain>
    </source>
</reference>
<reference key="2">
    <citation type="journal article" date="1997" name="J. Biol. Chem.">
        <title>Differential extraction and protein sequencing reveals major differences in patterns of primary cell wall proteins from plants.</title>
        <authorList>
            <person name="Robertson D."/>
            <person name="Mitchell G.P."/>
            <person name="Gilroy J.S."/>
            <person name="Gerrish C."/>
            <person name="Bolwell G.P."/>
            <person name="Slabas A.R."/>
        </authorList>
    </citation>
    <scope>PROTEIN SEQUENCE OF 23-38</scope>
    <scope>SUBCELLULAR LOCATION</scope>
</reference>
<reference key="3">
    <citation type="submission" date="2008-07" db="UniProtKB">
        <authorList>
            <person name="Almagro L."/>
            <person name="Briceno Z."/>
            <person name="Pedreno M.A."/>
        </authorList>
    </citation>
    <scope>PROTEIN SEQUENCE OF 97-124; 160-180; 187-223 AND 259-282</scope>
</reference>
<protein>
    <recommendedName>
        <fullName>Basic 30 kDa endochitinase</fullName>
        <ecNumber>3.2.1.14</ecNumber>
    </recommendedName>
</protein>
<feature type="signal peptide" evidence="4">
    <location>
        <begin position="1"/>
        <end position="22"/>
    </location>
</feature>
<feature type="chain" id="PRO_0000005301" description="Basic 30 kDa endochitinase">
    <location>
        <begin position="23"/>
        <end position="315"/>
    </location>
</feature>
<feature type="propeptide" id="PRO_0000005302" description="Removed in mature form">
    <location>
        <begin position="316"/>
        <end position="322"/>
    </location>
</feature>
<feature type="domain" description="Chitin-binding type-1" evidence="3">
    <location>
        <begin position="23"/>
        <end position="64"/>
    </location>
</feature>
<feature type="active site" description="Proton donor" evidence="2">
    <location>
        <position position="138"/>
    </location>
</feature>
<feature type="modified residue" description="4-hydroxyproline" evidence="1">
    <location>
        <position position="66"/>
    </location>
</feature>
<feature type="modified residue" description="4-hydroxyproline" evidence="1">
    <location>
        <position position="68"/>
    </location>
</feature>
<feature type="disulfide bond" evidence="3">
    <location>
        <begin position="25"/>
        <end position="40"/>
    </location>
</feature>
<feature type="disulfide bond" evidence="3">
    <location>
        <begin position="34"/>
        <end position="46"/>
    </location>
</feature>
<feature type="disulfide bond" evidence="3">
    <location>
        <begin position="39"/>
        <end position="53"/>
    </location>
</feature>
<feature type="disulfide bond" evidence="3">
    <location>
        <begin position="58"/>
        <end position="62"/>
    </location>
</feature>
<feature type="disulfide bond" evidence="3">
    <location>
        <begin position="93"/>
        <end position="156"/>
    </location>
</feature>
<feature type="disulfide bond" evidence="3">
    <location>
        <begin position="168"/>
        <end position="176"/>
    </location>
</feature>
<feature type="disulfide bond" evidence="3">
    <location>
        <begin position="275"/>
        <end position="307"/>
    </location>
</feature>
<feature type="sequence conflict" description="In Ref. 2; AA sequence." evidence="5" ref="2">
    <original>C</original>
    <variation>R</variation>
    <location>
        <position position="34"/>
    </location>
</feature>
<feature type="sequence conflict" description="In Ref. 2; AA sequence." evidence="5" ref="2">
    <location>
        <position position="36"/>
    </location>
</feature>
<feature type="sequence conflict" description="In Ref. 3; AA sequence." evidence="5" ref="3">
    <original>V</original>
    <variation>I</variation>
    <location>
        <position position="106"/>
    </location>
</feature>
<feature type="sequence conflict" description="In Ref. 3; AA sequence." evidence="5" ref="3">
    <original>T</original>
    <variation>N</variation>
    <location>
        <position position="107"/>
    </location>
</feature>
<feature type="sequence conflict" description="In Ref. 3; AA sequence." evidence="5" ref="3">
    <original>T</original>
    <variation>S</variation>
    <location>
        <position position="107"/>
    </location>
</feature>
<comment type="function">
    <text>Defense against chitin-containing fungal pathogens.</text>
</comment>
<comment type="catalytic activity">
    <reaction>
        <text>Random endo-hydrolysis of N-acetyl-beta-D-glucosaminide (1-&gt;4)-beta-linkages in chitin and chitodextrins.</text>
        <dbReference type="EC" id="3.2.1.14"/>
    </reaction>
</comment>
<comment type="subcellular location">
    <subcellularLocation>
        <location evidence="4">Vacuole</location>
    </subcellularLocation>
    <subcellularLocation>
        <location evidence="4">Secreted</location>
        <location evidence="4">Cell wall</location>
    </subcellularLocation>
    <text>Vacuolar, protoplast and cell wall.</text>
</comment>
<comment type="induction">
    <text>By fungal infection.</text>
</comment>
<comment type="PTM">
    <text evidence="1">The 4-hydroxyproline residues are not glycosylated in this plant vacuolar protein.</text>
</comment>
<comment type="similarity">
    <text evidence="5">Belongs to the glycosyl hydrolase 19 family. Chitinase class I subfamily.</text>
</comment>
<proteinExistence type="evidence at protein level"/>
<sequence length="322" mass="34345">MRLSEFTTLFLLFSVLLLSASAEQCGSQAGGALCASGLCCSKFGWCGNTNEYCGPGNCQSQCPGGPGPSGDLGGVISNSMFDQMLNHRNDNACQGKNNFYSYNAFVTAAGSFPGFGTTGDITARKREIAAFLAQTSHETTGGWPTAPDGPYAWGYCFLREQGSPGDYCTPSSQWPCAPGRKYFGRGPIQISHNYNYGPCGRAIGVDLLNNPDLVATDPVISFKSAIWFWMTPQSPKPSCHDVITGRWQPSGADQAANRVPGFGVITNIINGGLECGHGSDSRVQDRIGFYRRYCGILGVSPGENLDCGNQRSFGNGLLVDIM</sequence>
<keyword id="KW-0119">Carbohydrate metabolism</keyword>
<keyword id="KW-0134">Cell wall</keyword>
<keyword id="KW-0146">Chitin degradation</keyword>
<keyword id="KW-0147">Chitin-binding</keyword>
<keyword id="KW-0903">Direct protein sequencing</keyword>
<keyword id="KW-1015">Disulfide bond</keyword>
<keyword id="KW-0326">Glycosidase</keyword>
<keyword id="KW-0378">Hydrolase</keyword>
<keyword id="KW-0379">Hydroxylation</keyword>
<keyword id="KW-0611">Plant defense</keyword>
<keyword id="KW-0624">Polysaccharide degradation</keyword>
<keyword id="KW-1185">Reference proteome</keyword>
<keyword id="KW-0964">Secreted</keyword>
<keyword id="KW-0732">Signal</keyword>
<keyword id="KW-0926">Vacuole</keyword>
<dbReference type="EC" id="3.2.1.14"/>
<dbReference type="EMBL" id="Z15140">
    <property type="protein sequence ID" value="CAA78845.1"/>
    <property type="molecule type" value="mRNA"/>
</dbReference>
<dbReference type="PIR" id="S37344">
    <property type="entry name" value="S37344"/>
</dbReference>
<dbReference type="RefSeq" id="NP_001234403.1">
    <property type="nucleotide sequence ID" value="NM_001247474.2"/>
</dbReference>
<dbReference type="SMR" id="Q05538"/>
<dbReference type="FunCoup" id="Q05538">
    <property type="interactions" value="216"/>
</dbReference>
<dbReference type="STRING" id="4081.Q05538"/>
<dbReference type="CAZy" id="CBM18">
    <property type="family name" value="Carbohydrate-Binding Module Family 18"/>
</dbReference>
<dbReference type="CAZy" id="GH19">
    <property type="family name" value="Glycoside Hydrolase Family 19"/>
</dbReference>
<dbReference type="PaxDb" id="4081-Solyc10g055810.1.1"/>
<dbReference type="EnsemblPlants" id="Solyc10g055810.2.1">
    <property type="protein sequence ID" value="Solyc10g055810.2.1"/>
    <property type="gene ID" value="Solyc10g055810.2"/>
</dbReference>
<dbReference type="GeneID" id="544148"/>
<dbReference type="Gramene" id="Solyc10g055810.2.1">
    <property type="protein sequence ID" value="Solyc10g055810.2.1"/>
    <property type="gene ID" value="Solyc10g055810.2"/>
</dbReference>
<dbReference type="KEGG" id="sly:544148"/>
<dbReference type="eggNOG" id="KOG4742">
    <property type="taxonomic scope" value="Eukaryota"/>
</dbReference>
<dbReference type="HOGENOM" id="CLU_045506_1_0_1"/>
<dbReference type="InParanoid" id="Q05538"/>
<dbReference type="OMA" id="GSDYCQP"/>
<dbReference type="OrthoDB" id="5985073at2759"/>
<dbReference type="PhylomeDB" id="Q05538"/>
<dbReference type="Proteomes" id="UP000004994">
    <property type="component" value="Chromosome 10"/>
</dbReference>
<dbReference type="GO" id="GO:0005576">
    <property type="term" value="C:extracellular region"/>
    <property type="evidence" value="ECO:0007669"/>
    <property type="project" value="UniProtKB-KW"/>
</dbReference>
<dbReference type="GO" id="GO:0005773">
    <property type="term" value="C:vacuole"/>
    <property type="evidence" value="ECO:0007669"/>
    <property type="project" value="UniProtKB-SubCell"/>
</dbReference>
<dbReference type="GO" id="GO:0008061">
    <property type="term" value="F:chitin binding"/>
    <property type="evidence" value="ECO:0007669"/>
    <property type="project" value="UniProtKB-KW"/>
</dbReference>
<dbReference type="GO" id="GO:0004568">
    <property type="term" value="F:chitinase activity"/>
    <property type="evidence" value="ECO:0000318"/>
    <property type="project" value="GO_Central"/>
</dbReference>
<dbReference type="GO" id="GO:0008843">
    <property type="term" value="F:endochitinase activity"/>
    <property type="evidence" value="ECO:0007669"/>
    <property type="project" value="UniProtKB-EC"/>
</dbReference>
<dbReference type="GO" id="GO:0016998">
    <property type="term" value="P:cell wall macromolecule catabolic process"/>
    <property type="evidence" value="ECO:0007669"/>
    <property type="project" value="InterPro"/>
</dbReference>
<dbReference type="GO" id="GO:0006032">
    <property type="term" value="P:chitin catabolic process"/>
    <property type="evidence" value="ECO:0007669"/>
    <property type="project" value="UniProtKB-KW"/>
</dbReference>
<dbReference type="GO" id="GO:0006952">
    <property type="term" value="P:defense response"/>
    <property type="evidence" value="ECO:0007669"/>
    <property type="project" value="UniProtKB-KW"/>
</dbReference>
<dbReference type="GO" id="GO:0000272">
    <property type="term" value="P:polysaccharide catabolic process"/>
    <property type="evidence" value="ECO:0007669"/>
    <property type="project" value="UniProtKB-KW"/>
</dbReference>
<dbReference type="CDD" id="cd00325">
    <property type="entry name" value="chitinase_GH19"/>
    <property type="match status" value="1"/>
</dbReference>
<dbReference type="CDD" id="cd06921">
    <property type="entry name" value="ChtBD1_GH19_hevein"/>
    <property type="match status" value="1"/>
</dbReference>
<dbReference type="FunFam" id="3.30.60.10:FF:000001">
    <property type="entry name" value="Basic endochitinase"/>
    <property type="match status" value="1"/>
</dbReference>
<dbReference type="FunFam" id="3.30.20.10:FF:000001">
    <property type="entry name" value="Endochitinase (Chitinase)"/>
    <property type="match status" value="1"/>
</dbReference>
<dbReference type="Gene3D" id="1.10.530.10">
    <property type="match status" value="1"/>
</dbReference>
<dbReference type="Gene3D" id="3.30.20.10">
    <property type="entry name" value="Endochitinase, domain 2"/>
    <property type="match status" value="1"/>
</dbReference>
<dbReference type="Gene3D" id="3.30.60.10">
    <property type="entry name" value="Endochitinase-like"/>
    <property type="match status" value="1"/>
</dbReference>
<dbReference type="InterPro" id="IPR001002">
    <property type="entry name" value="Chitin-bd_1"/>
</dbReference>
<dbReference type="InterPro" id="IPR018371">
    <property type="entry name" value="Chitin-binding_1_CS"/>
</dbReference>
<dbReference type="InterPro" id="IPR036861">
    <property type="entry name" value="Endochitinase-like_sf"/>
</dbReference>
<dbReference type="InterPro" id="IPR016283">
    <property type="entry name" value="Glyco_hydro_19"/>
</dbReference>
<dbReference type="InterPro" id="IPR000726">
    <property type="entry name" value="Glyco_hydro_19_cat"/>
</dbReference>
<dbReference type="InterPro" id="IPR023346">
    <property type="entry name" value="Lysozyme-like_dom_sf"/>
</dbReference>
<dbReference type="PANTHER" id="PTHR22595:SF149">
    <property type="entry name" value="BASIC 30 KDA ENDOCHITINASE"/>
    <property type="match status" value="1"/>
</dbReference>
<dbReference type="PANTHER" id="PTHR22595">
    <property type="entry name" value="CHITINASE-RELATED"/>
    <property type="match status" value="1"/>
</dbReference>
<dbReference type="Pfam" id="PF00187">
    <property type="entry name" value="Chitin_bind_1"/>
    <property type="match status" value="1"/>
</dbReference>
<dbReference type="Pfam" id="PF00182">
    <property type="entry name" value="Glyco_hydro_19"/>
    <property type="match status" value="1"/>
</dbReference>
<dbReference type="PIRSF" id="PIRSF001060">
    <property type="entry name" value="Endochitinase"/>
    <property type="match status" value="1"/>
</dbReference>
<dbReference type="PRINTS" id="PR00451">
    <property type="entry name" value="CHITINBINDNG"/>
</dbReference>
<dbReference type="SMART" id="SM00270">
    <property type="entry name" value="ChtBD1"/>
    <property type="match status" value="1"/>
</dbReference>
<dbReference type="SUPFAM" id="SSF53955">
    <property type="entry name" value="Lysozyme-like"/>
    <property type="match status" value="1"/>
</dbReference>
<dbReference type="SUPFAM" id="SSF57016">
    <property type="entry name" value="Plant lectins/antimicrobial peptides"/>
    <property type="match status" value="1"/>
</dbReference>
<dbReference type="PROSITE" id="PS00026">
    <property type="entry name" value="CHIT_BIND_I_1"/>
    <property type="match status" value="1"/>
</dbReference>
<dbReference type="PROSITE" id="PS50941">
    <property type="entry name" value="CHIT_BIND_I_2"/>
    <property type="match status" value="1"/>
</dbReference>
<dbReference type="PROSITE" id="PS00773">
    <property type="entry name" value="CHITINASE_19_1"/>
    <property type="match status" value="1"/>
</dbReference>
<dbReference type="PROSITE" id="PS00774">
    <property type="entry name" value="CHITINASE_19_2"/>
    <property type="match status" value="1"/>
</dbReference>
<organism>
    <name type="scientific">Solanum lycopersicum</name>
    <name type="common">Tomato</name>
    <name type="synonym">Lycopersicon esculentum</name>
    <dbReference type="NCBI Taxonomy" id="4081"/>
    <lineage>
        <taxon>Eukaryota</taxon>
        <taxon>Viridiplantae</taxon>
        <taxon>Streptophyta</taxon>
        <taxon>Embryophyta</taxon>
        <taxon>Tracheophyta</taxon>
        <taxon>Spermatophyta</taxon>
        <taxon>Magnoliopsida</taxon>
        <taxon>eudicotyledons</taxon>
        <taxon>Gunneridae</taxon>
        <taxon>Pentapetalae</taxon>
        <taxon>asterids</taxon>
        <taxon>lamiids</taxon>
        <taxon>Solanales</taxon>
        <taxon>Solanaceae</taxon>
        <taxon>Solanoideae</taxon>
        <taxon>Solaneae</taxon>
        <taxon>Solanum</taxon>
        <taxon>Solanum subgen. Lycopersicon</taxon>
    </lineage>
</organism>
<name>CHIC_SOLLC</name>
<accession>Q05538</accession>
<accession>P80800</accession>
<gene>
    <name type="primary">CHI9</name>
</gene>